<proteinExistence type="inferred from homology"/>
<protein>
    <recommendedName>
        <fullName evidence="1">Small ribosomal subunit protein uS3</fullName>
    </recommendedName>
    <alternativeName>
        <fullName evidence="2">30S ribosomal protein S3</fullName>
    </alternativeName>
</protein>
<keyword id="KW-0687">Ribonucleoprotein</keyword>
<keyword id="KW-0689">Ribosomal protein</keyword>
<keyword id="KW-0694">RNA-binding</keyword>
<keyword id="KW-0699">rRNA-binding</keyword>
<accession>A9R902</accession>
<comment type="function">
    <text evidence="1">Binds the lower part of the 30S subunit head. Binds mRNA in the 70S ribosome, positioning it for translation.</text>
</comment>
<comment type="subunit">
    <text evidence="1">Part of the 30S ribosomal subunit. Forms a tight complex with proteins S10 and S14.</text>
</comment>
<comment type="similarity">
    <text evidence="1">Belongs to the universal ribosomal protein uS3 family.</text>
</comment>
<gene>
    <name evidence="1" type="primary">rpsC</name>
    <name type="ordered locus">YpAngola_A0590</name>
</gene>
<name>RS3_YERPG</name>
<feature type="chain" id="PRO_1000141038" description="Small ribosomal subunit protein uS3">
    <location>
        <begin position="1"/>
        <end position="232"/>
    </location>
</feature>
<feature type="domain" description="KH type-2" evidence="1">
    <location>
        <begin position="39"/>
        <end position="107"/>
    </location>
</feature>
<dbReference type="EMBL" id="CP000901">
    <property type="protein sequence ID" value="ABX86575.1"/>
    <property type="molecule type" value="Genomic_DNA"/>
</dbReference>
<dbReference type="RefSeq" id="WP_002221644.1">
    <property type="nucleotide sequence ID" value="NZ_CP009935.1"/>
</dbReference>
<dbReference type="SMR" id="A9R902"/>
<dbReference type="GeneID" id="97454237"/>
<dbReference type="KEGG" id="ypg:YpAngola_A0590"/>
<dbReference type="PATRIC" id="fig|349746.12.peg.1539"/>
<dbReference type="GO" id="GO:0022627">
    <property type="term" value="C:cytosolic small ribosomal subunit"/>
    <property type="evidence" value="ECO:0007669"/>
    <property type="project" value="TreeGrafter"/>
</dbReference>
<dbReference type="GO" id="GO:0003729">
    <property type="term" value="F:mRNA binding"/>
    <property type="evidence" value="ECO:0007669"/>
    <property type="project" value="UniProtKB-UniRule"/>
</dbReference>
<dbReference type="GO" id="GO:0019843">
    <property type="term" value="F:rRNA binding"/>
    <property type="evidence" value="ECO:0007669"/>
    <property type="project" value="UniProtKB-UniRule"/>
</dbReference>
<dbReference type="GO" id="GO:0003735">
    <property type="term" value="F:structural constituent of ribosome"/>
    <property type="evidence" value="ECO:0007669"/>
    <property type="project" value="InterPro"/>
</dbReference>
<dbReference type="GO" id="GO:0006412">
    <property type="term" value="P:translation"/>
    <property type="evidence" value="ECO:0007669"/>
    <property type="project" value="UniProtKB-UniRule"/>
</dbReference>
<dbReference type="CDD" id="cd02412">
    <property type="entry name" value="KH-II_30S_S3"/>
    <property type="match status" value="1"/>
</dbReference>
<dbReference type="FunFam" id="3.30.1140.32:FF:000001">
    <property type="entry name" value="30S ribosomal protein S3"/>
    <property type="match status" value="1"/>
</dbReference>
<dbReference type="FunFam" id="3.30.300.20:FF:000001">
    <property type="entry name" value="30S ribosomal protein S3"/>
    <property type="match status" value="1"/>
</dbReference>
<dbReference type="Gene3D" id="3.30.300.20">
    <property type="match status" value="1"/>
</dbReference>
<dbReference type="Gene3D" id="3.30.1140.32">
    <property type="entry name" value="Ribosomal protein S3, C-terminal domain"/>
    <property type="match status" value="1"/>
</dbReference>
<dbReference type="HAMAP" id="MF_01309_B">
    <property type="entry name" value="Ribosomal_uS3_B"/>
    <property type="match status" value="1"/>
</dbReference>
<dbReference type="InterPro" id="IPR004087">
    <property type="entry name" value="KH_dom"/>
</dbReference>
<dbReference type="InterPro" id="IPR015946">
    <property type="entry name" value="KH_dom-like_a/b"/>
</dbReference>
<dbReference type="InterPro" id="IPR004044">
    <property type="entry name" value="KH_dom_type_2"/>
</dbReference>
<dbReference type="InterPro" id="IPR009019">
    <property type="entry name" value="KH_sf_prok-type"/>
</dbReference>
<dbReference type="InterPro" id="IPR036419">
    <property type="entry name" value="Ribosomal_S3_C_sf"/>
</dbReference>
<dbReference type="InterPro" id="IPR005704">
    <property type="entry name" value="Ribosomal_uS3_bac-typ"/>
</dbReference>
<dbReference type="InterPro" id="IPR001351">
    <property type="entry name" value="Ribosomal_uS3_C"/>
</dbReference>
<dbReference type="InterPro" id="IPR018280">
    <property type="entry name" value="Ribosomal_uS3_CS"/>
</dbReference>
<dbReference type="NCBIfam" id="TIGR01009">
    <property type="entry name" value="rpsC_bact"/>
    <property type="match status" value="1"/>
</dbReference>
<dbReference type="PANTHER" id="PTHR11760">
    <property type="entry name" value="30S/40S RIBOSOMAL PROTEIN S3"/>
    <property type="match status" value="1"/>
</dbReference>
<dbReference type="PANTHER" id="PTHR11760:SF19">
    <property type="entry name" value="SMALL RIBOSOMAL SUBUNIT PROTEIN US3C"/>
    <property type="match status" value="1"/>
</dbReference>
<dbReference type="Pfam" id="PF07650">
    <property type="entry name" value="KH_2"/>
    <property type="match status" value="1"/>
</dbReference>
<dbReference type="Pfam" id="PF00189">
    <property type="entry name" value="Ribosomal_S3_C"/>
    <property type="match status" value="1"/>
</dbReference>
<dbReference type="SMART" id="SM00322">
    <property type="entry name" value="KH"/>
    <property type="match status" value="1"/>
</dbReference>
<dbReference type="SUPFAM" id="SSF54814">
    <property type="entry name" value="Prokaryotic type KH domain (KH-domain type II)"/>
    <property type="match status" value="1"/>
</dbReference>
<dbReference type="SUPFAM" id="SSF54821">
    <property type="entry name" value="Ribosomal protein S3 C-terminal domain"/>
    <property type="match status" value="1"/>
</dbReference>
<dbReference type="PROSITE" id="PS50823">
    <property type="entry name" value="KH_TYPE_2"/>
    <property type="match status" value="1"/>
</dbReference>
<dbReference type="PROSITE" id="PS00548">
    <property type="entry name" value="RIBOSOMAL_S3"/>
    <property type="match status" value="1"/>
</dbReference>
<organism>
    <name type="scientific">Yersinia pestis bv. Antiqua (strain Angola)</name>
    <dbReference type="NCBI Taxonomy" id="349746"/>
    <lineage>
        <taxon>Bacteria</taxon>
        <taxon>Pseudomonadati</taxon>
        <taxon>Pseudomonadota</taxon>
        <taxon>Gammaproteobacteria</taxon>
        <taxon>Enterobacterales</taxon>
        <taxon>Yersiniaceae</taxon>
        <taxon>Yersinia</taxon>
    </lineage>
</organism>
<reference key="1">
    <citation type="journal article" date="2010" name="J. Bacteriol.">
        <title>Genome sequence of the deep-rooted Yersinia pestis strain Angola reveals new insights into the evolution and pangenome of the plague bacterium.</title>
        <authorList>
            <person name="Eppinger M."/>
            <person name="Worsham P.L."/>
            <person name="Nikolich M.P."/>
            <person name="Riley D.R."/>
            <person name="Sebastian Y."/>
            <person name="Mou S."/>
            <person name="Achtman M."/>
            <person name="Lindler L.E."/>
            <person name="Ravel J."/>
        </authorList>
    </citation>
    <scope>NUCLEOTIDE SEQUENCE [LARGE SCALE GENOMIC DNA]</scope>
    <source>
        <strain>Angola</strain>
    </source>
</reference>
<sequence>MGQKVHPNGIRLGIVKAWNSTWYANTKEFADNLDSDFKVRQFLTKELAKASVSRIVIERPAKSIRVTIHTARPGIVIGKKGEDVEKLRKVVADIAGVPAQINIAEVRKPELDAKLVADSITSQLERRVMFRRAMKRAVQNAMRLGAKGIKVEVSGRLGGAEIARTEWYREGRVPLHTLRADIDYNTSEAHTTYGVIGVKVWIFKGEILGGMAAVEQPEPAAQPKKQQRKGRK</sequence>
<evidence type="ECO:0000255" key="1">
    <source>
        <dbReference type="HAMAP-Rule" id="MF_01309"/>
    </source>
</evidence>
<evidence type="ECO:0000305" key="2"/>